<organism>
    <name type="scientific">Xenopus laevis</name>
    <name type="common">African clawed frog</name>
    <dbReference type="NCBI Taxonomy" id="8355"/>
    <lineage>
        <taxon>Eukaryota</taxon>
        <taxon>Metazoa</taxon>
        <taxon>Chordata</taxon>
        <taxon>Craniata</taxon>
        <taxon>Vertebrata</taxon>
        <taxon>Euteleostomi</taxon>
        <taxon>Amphibia</taxon>
        <taxon>Batrachia</taxon>
        <taxon>Anura</taxon>
        <taxon>Pipoidea</taxon>
        <taxon>Pipidae</taxon>
        <taxon>Xenopodinae</taxon>
        <taxon>Xenopus</taxon>
        <taxon>Xenopus</taxon>
    </lineage>
</organism>
<feature type="chain" id="PRO_0000365399" description="Eukaryotic translation initiation factor 3 subunit G-B">
    <location>
        <begin position="1"/>
        <end position="308"/>
    </location>
</feature>
<feature type="domain" description="RRM" evidence="1">
    <location>
        <begin position="227"/>
        <end position="305"/>
    </location>
</feature>
<feature type="region of interest" description="Disordered" evidence="2">
    <location>
        <begin position="1"/>
        <end position="35"/>
    </location>
</feature>
<feature type="region of interest" description="Disordered" evidence="2">
    <location>
        <begin position="176"/>
        <end position="227"/>
    </location>
</feature>
<feature type="compositionally biased region" description="Low complexity" evidence="2">
    <location>
        <begin position="185"/>
        <end position="194"/>
    </location>
</feature>
<feature type="compositionally biased region" description="Basic and acidic residues" evidence="2">
    <location>
        <begin position="209"/>
        <end position="227"/>
    </location>
</feature>
<proteinExistence type="evidence at transcript level"/>
<accession>Q641B2</accession>
<reference key="1">
    <citation type="submission" date="2004-09" db="EMBL/GenBank/DDBJ databases">
        <authorList>
            <consortium name="NIH - Xenopus Gene Collection (XGC) project"/>
        </authorList>
    </citation>
    <scope>NUCLEOTIDE SEQUENCE [LARGE SCALE MRNA]</scope>
    <source>
        <tissue>Embryo</tissue>
    </source>
</reference>
<evidence type="ECO:0000255" key="1">
    <source>
        <dbReference type="HAMAP-Rule" id="MF_03006"/>
    </source>
</evidence>
<evidence type="ECO:0000256" key="2">
    <source>
        <dbReference type="SAM" id="MobiDB-lite"/>
    </source>
</evidence>
<name>EI3GB_XENLA</name>
<gene>
    <name type="primary">eif3g-b</name>
    <name type="synonym">eif3s4-b</name>
</gene>
<comment type="function">
    <text evidence="1">RNA-binding component of the eukaryotic translation initiation factor 3 (eIF-3) complex, which is involved in protein synthesis of a specialized repertoire of mRNAs and, together with other initiation factors, stimulates binding of mRNA and methionyl-tRNAi to the 40S ribosome. The eIF-3 complex specifically targets and initiates translation of a subset of mRNAs involved in cell proliferation. This subunit can bind 18S rRNA.</text>
</comment>
<comment type="subunit">
    <text evidence="1">Component of the eukaryotic translation initiation factor 3 (eIF-3) complex, which is composed of 13 subunits: eif3a, eif3b, eif3c, eif3d, eif3e, eif3f, eif3g, eif3h, eif3i, eif3j, eif3k, eif3l and eif3m.</text>
</comment>
<comment type="subcellular location">
    <subcellularLocation>
        <location evidence="1">Cytoplasm</location>
    </subcellularLocation>
</comment>
<comment type="similarity">
    <text evidence="1">Belongs to the eIF-3 subunit G family.</text>
</comment>
<sequence length="308" mass="34460">MPTGDYDSKPSWADQVEEEGIDVEPLSPQIKKQDPASFVLDTPREVINGNIKTITEYKLNDKDKKIKIVRTFKIETLKASKVVAHRKNWKKFGNSEYDPPGPNVATTTVSDDVLMTFITNKEDLNNQEEEDPMNKLKGQKIVSCRICKGDHWTTRCPYKDTLGPMQKELAEQLGLSTADKEKAPGAEPEPAQAPVSKTGKYVPPSLRDGGSRRGESMQPNRRADDNATIRVTNLSEDTRETDLQELFRPFGSISRIYLAKDKTTGQSKGFAFISFHRREDAARAIAGVSGFGYDHLILNVEWAKPSTN</sequence>
<keyword id="KW-0963">Cytoplasm</keyword>
<keyword id="KW-0396">Initiation factor</keyword>
<keyword id="KW-0648">Protein biosynthesis</keyword>
<keyword id="KW-1185">Reference proteome</keyword>
<keyword id="KW-0694">RNA-binding</keyword>
<dbReference type="EMBL" id="BC082427">
    <property type="protein sequence ID" value="AAH82427.1"/>
    <property type="molecule type" value="mRNA"/>
</dbReference>
<dbReference type="RefSeq" id="NP_001087888.1">
    <property type="nucleotide sequence ID" value="NM_001094419.1"/>
</dbReference>
<dbReference type="BMRB" id="Q641B2"/>
<dbReference type="SMR" id="Q641B2"/>
<dbReference type="BioGRID" id="104609">
    <property type="interactions" value="1"/>
</dbReference>
<dbReference type="DNASU" id="447749"/>
<dbReference type="GeneID" id="447749"/>
<dbReference type="KEGG" id="xla:447749"/>
<dbReference type="AGR" id="Xenbase:XB-GENE-6070476"/>
<dbReference type="CTD" id="447749"/>
<dbReference type="Xenbase" id="XB-GENE-6070476">
    <property type="gene designation" value="eif3g.L"/>
</dbReference>
<dbReference type="OMA" id="EEVHMVF"/>
<dbReference type="OrthoDB" id="1749473at2759"/>
<dbReference type="Proteomes" id="UP000186698">
    <property type="component" value="Chromosome 3L"/>
</dbReference>
<dbReference type="Bgee" id="447749">
    <property type="expression patterns" value="Expressed in pancreas and 19 other cell types or tissues"/>
</dbReference>
<dbReference type="GO" id="GO:0016282">
    <property type="term" value="C:eukaryotic 43S preinitiation complex"/>
    <property type="evidence" value="ECO:0007669"/>
    <property type="project" value="UniProtKB-UniRule"/>
</dbReference>
<dbReference type="GO" id="GO:0033290">
    <property type="term" value="C:eukaryotic 48S preinitiation complex"/>
    <property type="evidence" value="ECO:0007669"/>
    <property type="project" value="UniProtKB-UniRule"/>
</dbReference>
<dbReference type="GO" id="GO:0005852">
    <property type="term" value="C:eukaryotic translation initiation factor 3 complex"/>
    <property type="evidence" value="ECO:0000250"/>
    <property type="project" value="UniProtKB"/>
</dbReference>
<dbReference type="GO" id="GO:0003723">
    <property type="term" value="F:RNA binding"/>
    <property type="evidence" value="ECO:0007669"/>
    <property type="project" value="UniProtKB-UniRule"/>
</dbReference>
<dbReference type="GO" id="GO:0003743">
    <property type="term" value="F:translation initiation factor activity"/>
    <property type="evidence" value="ECO:0007669"/>
    <property type="project" value="UniProtKB-UniRule"/>
</dbReference>
<dbReference type="GO" id="GO:0001732">
    <property type="term" value="P:formation of cytoplasmic translation initiation complex"/>
    <property type="evidence" value="ECO:0007669"/>
    <property type="project" value="UniProtKB-UniRule"/>
</dbReference>
<dbReference type="GO" id="GO:0006413">
    <property type="term" value="P:translational initiation"/>
    <property type="evidence" value="ECO:0000250"/>
    <property type="project" value="UniProtKB"/>
</dbReference>
<dbReference type="CDD" id="cd12933">
    <property type="entry name" value="eIF3G"/>
    <property type="match status" value="1"/>
</dbReference>
<dbReference type="CDD" id="cd12408">
    <property type="entry name" value="RRM_eIF3G_like"/>
    <property type="match status" value="1"/>
</dbReference>
<dbReference type="FunFam" id="3.30.70.330:FF:000194">
    <property type="entry name" value="Eukaryotic translation initiation factor 3 subunit G"/>
    <property type="match status" value="1"/>
</dbReference>
<dbReference type="Gene3D" id="3.30.70.330">
    <property type="match status" value="1"/>
</dbReference>
<dbReference type="HAMAP" id="MF_03006">
    <property type="entry name" value="eIF3g"/>
    <property type="match status" value="1"/>
</dbReference>
<dbReference type="InterPro" id="IPR017334">
    <property type="entry name" value="eIF3_g"/>
</dbReference>
<dbReference type="InterPro" id="IPR024675">
    <property type="entry name" value="eIF3g_N"/>
</dbReference>
<dbReference type="InterPro" id="IPR034240">
    <property type="entry name" value="eIF3G_RRM"/>
</dbReference>
<dbReference type="InterPro" id="IPR012677">
    <property type="entry name" value="Nucleotide-bd_a/b_plait_sf"/>
</dbReference>
<dbReference type="InterPro" id="IPR035979">
    <property type="entry name" value="RBD_domain_sf"/>
</dbReference>
<dbReference type="InterPro" id="IPR000504">
    <property type="entry name" value="RRM_dom"/>
</dbReference>
<dbReference type="PANTHER" id="PTHR10352">
    <property type="entry name" value="EUKARYOTIC TRANSLATION INITIATION FACTOR 3 SUBUNIT G"/>
    <property type="match status" value="1"/>
</dbReference>
<dbReference type="Pfam" id="PF12353">
    <property type="entry name" value="eIF3g"/>
    <property type="match status" value="1"/>
</dbReference>
<dbReference type="Pfam" id="PF00076">
    <property type="entry name" value="RRM_1"/>
    <property type="match status" value="1"/>
</dbReference>
<dbReference type="PIRSF" id="PIRSF037949">
    <property type="entry name" value="Transl_init_eIF-3_RNA-bind"/>
    <property type="match status" value="1"/>
</dbReference>
<dbReference type="SMART" id="SM00360">
    <property type="entry name" value="RRM"/>
    <property type="match status" value="1"/>
</dbReference>
<dbReference type="SUPFAM" id="SSF54928">
    <property type="entry name" value="RNA-binding domain, RBD"/>
    <property type="match status" value="1"/>
</dbReference>
<dbReference type="PROSITE" id="PS50102">
    <property type="entry name" value="RRM"/>
    <property type="match status" value="1"/>
</dbReference>
<protein>
    <recommendedName>
        <fullName evidence="1">Eukaryotic translation initiation factor 3 subunit G-B</fullName>
        <shortName evidence="1">eIF3g-B</shortName>
    </recommendedName>
    <alternativeName>
        <fullName evidence="1">Eukaryotic translation initiation factor 3 RNA-binding subunit B</fullName>
        <shortName evidence="1">eIF-3 RNA-binding subunit B</shortName>
    </alternativeName>
    <alternativeName>
        <fullName evidence="1">Eukaryotic translation initiation factor 3 subunit 4-B</fullName>
    </alternativeName>
</protein>